<evidence type="ECO:0000250" key="1"/>
<evidence type="ECO:0000255" key="2"/>
<evidence type="ECO:0000255" key="3">
    <source>
        <dbReference type="PROSITE-ProRule" id="PRU00090"/>
    </source>
</evidence>
<evidence type="ECO:0000305" key="4"/>
<sequence>MQGVTRASILLIIYHLFTLSLGQLHGEKGISVPEHGFCQPISIPLCTDIAYNQTIMPNLLGHTNQEDAGLEVHQFYPLVKVQCSSELRFFLCSMYAPVCTVLEQAIPPCRSICERARHGCEALMNKFGFQWPERLRCENFPRHGAEQICVGQNHSEDGGPTLLTTSPPHHGTPGPPIYATLDHPFHCPRVLKVPSYLNYRFLGEKDCAAPCEPTKSDGFMFFSQDEIRFARIWILIWSVLCCASTFITVTTYLVDMQRFRYPERPIIFLSGCYTMVSVAYIAGFVLGDKVVCNEGFSEDGYKTVVQGTKKEGCTILFMMLYFFSMASSIWWVILSLTWFLAAGMKWGHEAIEANSQYFHLAAWAVPAVKTITILAMGQIDGDLLSGVCFVGLNNIDPLRGFVLAPLFVYLFIGTSFLLAGFVSLFRIRTIMKHDGTKTEKLERLMVRIGVFSVLYTVPATIVIACYFYEQAFREHWERSWVSQNCKSLAIPCPLQYTPRMTPDFTVYMIKYLMTLIVGITSGFWIWSGKTLHSWRKFYTRLTNSKHGETTV</sequence>
<organism>
    <name type="scientific">Xenopus laevis</name>
    <name type="common">African clawed frog</name>
    <dbReference type="NCBI Taxonomy" id="8355"/>
    <lineage>
        <taxon>Eukaryota</taxon>
        <taxon>Metazoa</taxon>
        <taxon>Chordata</taxon>
        <taxon>Craniata</taxon>
        <taxon>Vertebrata</taxon>
        <taxon>Euteleostomi</taxon>
        <taxon>Amphibia</taxon>
        <taxon>Batrachia</taxon>
        <taxon>Anura</taxon>
        <taxon>Pipoidea</taxon>
        <taxon>Pipidae</taxon>
        <taxon>Xenopodinae</taxon>
        <taxon>Xenopus</taxon>
        <taxon>Xenopus</taxon>
    </lineage>
</organism>
<proteinExistence type="evidence at transcript level"/>
<accession>Q9PUU6</accession>
<accession>Q2TAR6</accession>
<comment type="function">
    <text>Receptor for Wnt proteins. Most of frizzled receptors are coupled to the beta-catenin canonical signaling pathway, which leads to the activation of disheveled proteins, inhibition of GSK-3 kinase, nuclear accumulation of beta-catenin and activation of Wnt target genes. A second signaling pathway involving PKC and calcium fluxes has been seen for some family members, but it is not yet clear if it represents a distinct pathway or if it can be integrated in the canonical pathway, as PKC seems to be required for Wnt-mediated inactivation of GSK-3 kinase. Both pathways seem to involve interactions with G-proteins. May be involved in transduction and intercellular transmission of polarity information during tissue morphogenesis and/or in differentiated tissues.</text>
</comment>
<comment type="subcellular location">
    <subcellularLocation>
        <location>Membrane</location>
        <topology>Multi-pass membrane protein</topology>
    </subcellularLocation>
    <subcellularLocation>
        <location evidence="1">Cell membrane</location>
        <topology evidence="1">Multi-pass membrane protein</topology>
    </subcellularLocation>
</comment>
<comment type="tissue specificity">
    <text>Widely expressed, especially in the eye anlage, otic vesicle and developing somites.</text>
</comment>
<comment type="developmental stage">
    <text>Minimal expression in oocytes and embryos prior to mid-blastula transition. Readily detected in the presomitic tissue from late gastrulae. By neurula stages, somitic expression is broader and also appears in developing neural structures and other anterior structures (eye anlage). By late neurula, the posterior expression is condensed into two stripes on each side, expression in the anterior tissues remains high in the developing eye. During tailbud stages, expression is still high in the eye vesicle, otic vesicle and other anterior regions, as well as the presomitic mesoderm. In the tadpole, highly expressed in the head, eye and otic vesicle, branchial arches and midportion of the somites.</text>
</comment>
<comment type="domain">
    <text evidence="1">Lys-Thr-X-X-X-Trp motif interacts with the PDZ domain of Dvl (Disheveled) family members and is involved in the activation of the Wnt/beta-catenin signaling pathway.</text>
</comment>
<comment type="domain">
    <text evidence="1">The FZ domain is involved in binding with Wnt ligands.</text>
</comment>
<comment type="similarity">
    <text evidence="4">Belongs to the G-protein coupled receptor Fz/Smo family.</text>
</comment>
<reference key="1">
    <citation type="journal article" date="1999" name="Mech. Dev.">
        <title>Xenopus frizzled-2 is expressed highly in the developing eye, otic vesicle and somites.</title>
        <authorList>
            <person name="Deardorff M.A."/>
            <person name="Klein P.S."/>
        </authorList>
    </citation>
    <scope>NUCLEOTIDE SEQUENCE [MRNA]</scope>
    <source>
        <tissue>Head</tissue>
    </source>
</reference>
<reference key="2">
    <citation type="submission" date="2005-12" db="EMBL/GenBank/DDBJ databases">
        <authorList>
            <consortium name="NIH - Xenopus Gene Collection (XGC) project"/>
        </authorList>
    </citation>
    <scope>NUCLEOTIDE SEQUENCE [LARGE SCALE MRNA]</scope>
    <source>
        <tissue>Embryo</tissue>
    </source>
</reference>
<gene>
    <name type="primary">fzd2</name>
    <name type="synonym">fz2</name>
</gene>
<protein>
    <recommendedName>
        <fullName>Frizzled-2</fullName>
        <shortName>Fz-2</shortName>
        <shortName>Xfz2</shortName>
    </recommendedName>
</protein>
<keyword id="KW-1003">Cell membrane</keyword>
<keyword id="KW-0217">Developmental protein</keyword>
<keyword id="KW-1015">Disulfide bond</keyword>
<keyword id="KW-0297">G-protein coupled receptor</keyword>
<keyword id="KW-0325">Glycoprotein</keyword>
<keyword id="KW-0472">Membrane</keyword>
<keyword id="KW-0675">Receptor</keyword>
<keyword id="KW-1185">Reference proteome</keyword>
<keyword id="KW-0732">Signal</keyword>
<keyword id="KW-0807">Transducer</keyword>
<keyword id="KW-0812">Transmembrane</keyword>
<keyword id="KW-1133">Transmembrane helix</keyword>
<keyword id="KW-0879">Wnt signaling pathway</keyword>
<name>FZD2_XENLA</name>
<feature type="signal peptide" evidence="2">
    <location>
        <begin position="1"/>
        <end position="26"/>
    </location>
</feature>
<feature type="chain" id="PRO_0000012981" description="Frizzled-2">
    <location>
        <begin position="27"/>
        <end position="551"/>
    </location>
</feature>
<feature type="topological domain" description="Extracellular" evidence="2">
    <location>
        <begin position="27"/>
        <end position="231"/>
    </location>
</feature>
<feature type="transmembrane region" description="Helical; Name=1" evidence="2">
    <location>
        <begin position="232"/>
        <end position="252"/>
    </location>
</feature>
<feature type="topological domain" description="Cytoplasmic" evidence="2">
    <location>
        <begin position="253"/>
        <end position="265"/>
    </location>
</feature>
<feature type="transmembrane region" description="Helical; Name=2" evidence="2">
    <location>
        <begin position="266"/>
        <end position="286"/>
    </location>
</feature>
<feature type="topological domain" description="Extracellular" evidence="2">
    <location>
        <begin position="287"/>
        <end position="313"/>
    </location>
</feature>
<feature type="transmembrane region" description="Helical; Name=3" evidence="2">
    <location>
        <begin position="314"/>
        <end position="334"/>
    </location>
</feature>
<feature type="topological domain" description="Cytoplasmic" evidence="2">
    <location>
        <begin position="335"/>
        <end position="356"/>
    </location>
</feature>
<feature type="transmembrane region" description="Helical; Name=4" evidence="2">
    <location>
        <begin position="357"/>
        <end position="377"/>
    </location>
</feature>
<feature type="topological domain" description="Extracellular" evidence="2">
    <location>
        <begin position="378"/>
        <end position="400"/>
    </location>
</feature>
<feature type="transmembrane region" description="Helical; Name=5" evidence="2">
    <location>
        <begin position="401"/>
        <end position="421"/>
    </location>
</feature>
<feature type="topological domain" description="Cytoplasmic" evidence="2">
    <location>
        <begin position="422"/>
        <end position="447"/>
    </location>
</feature>
<feature type="transmembrane region" description="Helical; Name=6" evidence="2">
    <location>
        <begin position="448"/>
        <end position="468"/>
    </location>
</feature>
<feature type="topological domain" description="Extracellular" evidence="2">
    <location>
        <begin position="469"/>
        <end position="505"/>
    </location>
</feature>
<feature type="transmembrane region" description="Helical; Name=7" evidence="2">
    <location>
        <begin position="506"/>
        <end position="526"/>
    </location>
</feature>
<feature type="topological domain" description="Cytoplasmic" evidence="2">
    <location>
        <begin position="527"/>
        <end position="534"/>
    </location>
</feature>
<feature type="domain" description="FZ" evidence="3">
    <location>
        <begin position="33"/>
        <end position="152"/>
    </location>
</feature>
<feature type="short sequence motif" description="Lys-Thr-X-X-X-Trp motif, mediates interaction with the PDZ domain of Dvl family members" evidence="1">
    <location>
        <begin position="529"/>
        <end position="534"/>
    </location>
</feature>
<feature type="short sequence motif" description="PDZ-binding">
    <location>
        <begin position="549"/>
        <end position="551"/>
    </location>
</feature>
<feature type="glycosylation site" description="N-linked (GlcNAc...) asparagine" evidence="2">
    <location>
        <position position="52"/>
    </location>
</feature>
<feature type="glycosylation site" description="N-linked (GlcNAc...) asparagine" evidence="2">
    <location>
        <position position="153"/>
    </location>
</feature>
<feature type="disulfide bond" evidence="3">
    <location>
        <begin position="38"/>
        <end position="99"/>
    </location>
</feature>
<feature type="disulfide bond" evidence="3">
    <location>
        <begin position="46"/>
        <end position="92"/>
    </location>
</feature>
<feature type="disulfide bond" evidence="3">
    <location>
        <begin position="83"/>
        <end position="120"/>
    </location>
</feature>
<feature type="disulfide bond" evidence="3">
    <location>
        <begin position="109"/>
        <end position="149"/>
    </location>
</feature>
<feature type="disulfide bond" evidence="3">
    <location>
        <begin position="113"/>
        <end position="137"/>
    </location>
</feature>
<dbReference type="EMBL" id="AF139165">
    <property type="protein sequence ID" value="AAF06359.1"/>
    <property type="molecule type" value="mRNA"/>
</dbReference>
<dbReference type="EMBL" id="BC110756">
    <property type="protein sequence ID" value="AAI10757.1"/>
    <property type="molecule type" value="mRNA"/>
</dbReference>
<dbReference type="RefSeq" id="NP_001083829.1">
    <property type="nucleotide sequence ID" value="NM_001090360.1"/>
</dbReference>
<dbReference type="SMR" id="Q9PUU6"/>
<dbReference type="GlyCosmos" id="Q9PUU6">
    <property type="glycosylation" value="2 sites, No reported glycans"/>
</dbReference>
<dbReference type="DNASU" id="399141"/>
<dbReference type="GeneID" id="399141"/>
<dbReference type="KEGG" id="xla:399141"/>
<dbReference type="AGR" id="Xenbase:XB-GENE-865666"/>
<dbReference type="CTD" id="399141"/>
<dbReference type="Xenbase" id="XB-GENE-865666">
    <property type="gene designation" value="fzd2.S"/>
</dbReference>
<dbReference type="OMA" id="CEHYRSS"/>
<dbReference type="OrthoDB" id="10053709at2759"/>
<dbReference type="Proteomes" id="UP000186698">
    <property type="component" value="Chromosome 9_10S"/>
</dbReference>
<dbReference type="Bgee" id="399141">
    <property type="expression patterns" value="Expressed in internal ear and 19 other cell types or tissues"/>
</dbReference>
<dbReference type="GO" id="GO:0005886">
    <property type="term" value="C:plasma membrane"/>
    <property type="evidence" value="ECO:0000318"/>
    <property type="project" value="GO_Central"/>
</dbReference>
<dbReference type="GO" id="GO:0004930">
    <property type="term" value="F:G protein-coupled receptor activity"/>
    <property type="evidence" value="ECO:0007669"/>
    <property type="project" value="UniProtKB-KW"/>
</dbReference>
<dbReference type="GO" id="GO:0042813">
    <property type="term" value="F:Wnt receptor activity"/>
    <property type="evidence" value="ECO:0000318"/>
    <property type="project" value="GO_Central"/>
</dbReference>
<dbReference type="GO" id="GO:0017147">
    <property type="term" value="F:Wnt-protein binding"/>
    <property type="evidence" value="ECO:0000318"/>
    <property type="project" value="GO_Central"/>
</dbReference>
<dbReference type="GO" id="GO:0060070">
    <property type="term" value="P:canonical Wnt signaling pathway"/>
    <property type="evidence" value="ECO:0000318"/>
    <property type="project" value="GO_Central"/>
</dbReference>
<dbReference type="GO" id="GO:0035567">
    <property type="term" value="P:non-canonical Wnt signaling pathway"/>
    <property type="evidence" value="ECO:0000318"/>
    <property type="project" value="GO_Central"/>
</dbReference>
<dbReference type="CDD" id="cd15245">
    <property type="entry name" value="7tmF_FZD2"/>
    <property type="match status" value="1"/>
</dbReference>
<dbReference type="CDD" id="cd07464">
    <property type="entry name" value="CRD_FZ2"/>
    <property type="match status" value="1"/>
</dbReference>
<dbReference type="FunFam" id="1.10.2000.10:FF:000003">
    <property type="entry name" value="Frizzled class receptor 2"/>
    <property type="match status" value="1"/>
</dbReference>
<dbReference type="FunFam" id="1.20.1070.10:FF:000029">
    <property type="entry name" value="Frizzled class receptor 2"/>
    <property type="match status" value="1"/>
</dbReference>
<dbReference type="Gene3D" id="1.10.2000.10">
    <property type="entry name" value="Frizzled cysteine-rich domain"/>
    <property type="match status" value="1"/>
</dbReference>
<dbReference type="Gene3D" id="1.20.1070.10">
    <property type="entry name" value="Rhodopsin 7-helix transmembrane proteins"/>
    <property type="match status" value="1"/>
</dbReference>
<dbReference type="InterPro" id="IPR015526">
    <property type="entry name" value="Frizzled/SFRP"/>
</dbReference>
<dbReference type="InterPro" id="IPR000539">
    <property type="entry name" value="Frizzled/Smoothened_7TM"/>
</dbReference>
<dbReference type="InterPro" id="IPR020067">
    <property type="entry name" value="Frizzled_dom"/>
</dbReference>
<dbReference type="InterPro" id="IPR036790">
    <property type="entry name" value="Frizzled_dom_sf"/>
</dbReference>
<dbReference type="InterPro" id="IPR041778">
    <property type="entry name" value="FZ2_CRD"/>
</dbReference>
<dbReference type="InterPro" id="IPR017981">
    <property type="entry name" value="GPCR_2-like_7TM"/>
</dbReference>
<dbReference type="PANTHER" id="PTHR11309">
    <property type="entry name" value="FRIZZLED"/>
    <property type="match status" value="1"/>
</dbReference>
<dbReference type="PANTHER" id="PTHR11309:SF34">
    <property type="entry name" value="FRIZZLED-2"/>
    <property type="match status" value="1"/>
</dbReference>
<dbReference type="Pfam" id="PF01534">
    <property type="entry name" value="Frizzled"/>
    <property type="match status" value="1"/>
</dbReference>
<dbReference type="Pfam" id="PF01392">
    <property type="entry name" value="Fz"/>
    <property type="match status" value="1"/>
</dbReference>
<dbReference type="PRINTS" id="PR00489">
    <property type="entry name" value="FRIZZLED"/>
</dbReference>
<dbReference type="SMART" id="SM00063">
    <property type="entry name" value="FRI"/>
    <property type="match status" value="1"/>
</dbReference>
<dbReference type="SMART" id="SM01330">
    <property type="entry name" value="Frizzled"/>
    <property type="match status" value="1"/>
</dbReference>
<dbReference type="SUPFAM" id="SSF63501">
    <property type="entry name" value="Frizzled cysteine-rich domain"/>
    <property type="match status" value="1"/>
</dbReference>
<dbReference type="PROSITE" id="PS50038">
    <property type="entry name" value="FZ"/>
    <property type="match status" value="1"/>
</dbReference>
<dbReference type="PROSITE" id="PS50261">
    <property type="entry name" value="G_PROTEIN_RECEP_F2_4"/>
    <property type="match status" value="1"/>
</dbReference>